<accession>A5A3H3</accession>
<sequence>MNTATGVIALLVLATVIGCIEAEDTRADLQGGEAAEKVFRRSPTCIPSGQPCPYNENCCSQSCTFKENENGNTVKRCD</sequence>
<evidence type="ECO:0000250" key="1"/>
<evidence type="ECO:0000250" key="2">
    <source>
        <dbReference type="UniProtKB" id="P56207"/>
    </source>
</evidence>
<evidence type="ECO:0000255" key="3"/>
<evidence type="ECO:0000305" key="4"/>
<keyword id="KW-0108">Calcium channel impairing toxin</keyword>
<keyword id="KW-0165">Cleavage on pair of basic residues</keyword>
<keyword id="KW-1015">Disulfide bond</keyword>
<keyword id="KW-0872">Ion channel impairing toxin</keyword>
<keyword id="KW-0960">Knottin</keyword>
<keyword id="KW-0528">Neurotoxin</keyword>
<keyword id="KW-0964">Secreted</keyword>
<keyword id="KW-0732">Signal</keyword>
<keyword id="KW-0800">Toxin</keyword>
<keyword id="KW-1218">Voltage-gated calcium channel impairing toxin</keyword>
<keyword id="KW-0738">Voltage-gated sodium channel impairing toxin</keyword>
<protein>
    <recommendedName>
        <fullName>Omega-hexatoxin-Ar1d</fullName>
        <shortName>Omega-HXTX-Ar1d</shortName>
    </recommendedName>
    <alternativeName>
        <fullName>Omega-atracotoxin-Ar1d</fullName>
        <shortName>Omega-ACTX-Ar1d</shortName>
    </alternativeName>
</protein>
<dbReference type="EMBL" id="EF523497">
    <property type="protein sequence ID" value="ABP63656.1"/>
    <property type="molecule type" value="mRNA"/>
</dbReference>
<dbReference type="BMRB" id="A5A3H3"/>
<dbReference type="SMR" id="A5A3H3"/>
<dbReference type="ArachnoServer" id="AS000023">
    <property type="toxin name" value="omega-hexatoxin-Ar1d"/>
</dbReference>
<dbReference type="GO" id="GO:0005576">
    <property type="term" value="C:extracellular region"/>
    <property type="evidence" value="ECO:0007669"/>
    <property type="project" value="UniProtKB-SubCell"/>
</dbReference>
<dbReference type="GO" id="GO:0019855">
    <property type="term" value="F:calcium channel inhibitor activity"/>
    <property type="evidence" value="ECO:0007669"/>
    <property type="project" value="InterPro"/>
</dbReference>
<dbReference type="GO" id="GO:0017080">
    <property type="term" value="F:sodium channel regulator activity"/>
    <property type="evidence" value="ECO:0007669"/>
    <property type="project" value="UniProtKB-KW"/>
</dbReference>
<dbReference type="GO" id="GO:0090729">
    <property type="term" value="F:toxin activity"/>
    <property type="evidence" value="ECO:0007669"/>
    <property type="project" value="UniProtKB-KW"/>
</dbReference>
<dbReference type="GO" id="GO:0006952">
    <property type="term" value="P:defense response"/>
    <property type="evidence" value="ECO:0007669"/>
    <property type="project" value="InterPro"/>
</dbReference>
<dbReference type="InterPro" id="IPR009415">
    <property type="entry name" value="Omega-atracotox"/>
</dbReference>
<dbReference type="InterPro" id="IPR018071">
    <property type="entry name" value="Omega-atracotox_CS"/>
</dbReference>
<dbReference type="Pfam" id="PF06357">
    <property type="entry name" value="Omega-toxin"/>
    <property type="match status" value="1"/>
</dbReference>
<dbReference type="SUPFAM" id="SSF57059">
    <property type="entry name" value="omega toxin-like"/>
    <property type="match status" value="1"/>
</dbReference>
<dbReference type="PROSITE" id="PS60016">
    <property type="entry name" value="OMEGA_ACTX_1"/>
    <property type="match status" value="1"/>
</dbReference>
<feature type="signal peptide" evidence="3">
    <location>
        <begin position="1"/>
        <end position="22"/>
    </location>
</feature>
<feature type="propeptide" id="PRO_0000379912" evidence="1">
    <location>
        <begin position="23"/>
        <end position="41"/>
    </location>
</feature>
<feature type="peptide" id="PRO_0000379913" description="Omega-hexatoxin-Ar1d">
    <location>
        <begin position="42"/>
        <end position="78"/>
    </location>
</feature>
<feature type="site" description="Critical for insecticidal activity" evidence="2">
    <location>
        <position position="51"/>
    </location>
</feature>
<feature type="site" description="Critical for insecticidal activity" evidence="2">
    <location>
        <position position="68"/>
    </location>
</feature>
<feature type="site" description="Critical for insecticidal activity" evidence="2">
    <location>
        <position position="76"/>
    </location>
</feature>
<feature type="disulfide bond" evidence="2">
    <location>
        <begin position="45"/>
        <end position="59"/>
    </location>
</feature>
<feature type="disulfide bond" evidence="2">
    <location>
        <begin position="52"/>
        <end position="63"/>
    </location>
</feature>
<feature type="disulfide bond" evidence="2">
    <location>
        <begin position="58"/>
        <end position="77"/>
    </location>
</feature>
<organism>
    <name type="scientific">Atrax robustus</name>
    <name type="common">Sydney funnel-web spider</name>
    <dbReference type="NCBI Taxonomy" id="6903"/>
    <lineage>
        <taxon>Eukaryota</taxon>
        <taxon>Metazoa</taxon>
        <taxon>Ecdysozoa</taxon>
        <taxon>Arthropoda</taxon>
        <taxon>Chelicerata</taxon>
        <taxon>Arachnida</taxon>
        <taxon>Araneae</taxon>
        <taxon>Mygalomorphae</taxon>
        <taxon>Hexathelidae</taxon>
        <taxon>Atrax</taxon>
    </lineage>
</organism>
<reference key="1">
    <citation type="journal article" date="2007" name="Biochem. Pharmacol.">
        <title>The omega-atracotoxins: selective blockers of insect M-LVA and HVA calcium channels.</title>
        <authorList>
            <person name="Chong Y."/>
            <person name="Hayes J.L."/>
            <person name="Sollod B."/>
            <person name="Wen S."/>
            <person name="Wilson D.T."/>
            <person name="Hains P.G."/>
            <person name="Hodgson W.C."/>
            <person name="Broady K.W."/>
            <person name="King G.F."/>
            <person name="Nicholson G.M."/>
        </authorList>
    </citation>
    <scope>NUCLEOTIDE SEQUENCE [MRNA]</scope>
    <source>
        <strain>XenFW141</strain>
        <tissue>Venom gland</tissue>
    </source>
</reference>
<proteinExistence type="evidence at transcript level"/>
<comment type="function">
    <text evidence="1">Insecticidal toxin that reversibly and voltage-independently blocks both mid-low- (M-LVA) and high-voltage-activated (HVA) calcium channels (Cav) in cockroach DUM neurons. Also causes a modest block of insect sodium channel currents (Nav). Induces potent excitatory symptoms, followed by flaccid paralysis leading to death in house crickets (By similarity).</text>
</comment>
<comment type="subcellular location">
    <subcellularLocation>
        <location evidence="1">Secreted</location>
    </subcellularLocation>
</comment>
<comment type="tissue specificity">
    <text>Expressed by the venom gland.</text>
</comment>
<comment type="domain">
    <text evidence="1">The presence of a 'disulfide through disulfide knot' structurally defines this protein as a knottin.</text>
</comment>
<comment type="miscellaneous">
    <text>This toxin comes from a male specimen. It is observed that propeptide sequences coming from male specimen are identical but have only limited homology with the female paralogs, but the reason is unknown.</text>
</comment>
<comment type="similarity">
    <text evidence="4">Belongs to the neurotoxin 08 (Shiva) family. 01 (omega toxin) subfamily.</text>
</comment>
<name>TO1D_ATRRO</name>